<name>PXPA_BACC3</name>
<feature type="chain" id="PRO_1000200449" description="5-oxoprolinase subunit A">
    <location>
        <begin position="1"/>
        <end position="253"/>
    </location>
</feature>
<sequence length="253" mass="27655">MTTIDLNCDLGESFGAYKMGNDDEILPFVSSINVACGFHAGDPSVMRQTVEKAMQHNVAIGAHPGFPDLIGFGRRNMNVSANEVYDYVLYQIGALDAFVKAAGGKMQHVKPHGALYNMAATNPEIADAIAKAIHHMNPSLLLYGLANSEAFIQAAEKYNITLVQEAFADRTYKQDGTLTSRTEENALIKNEDEAIKQVLQMVKEGYVNTVNGKKVAVHAQTICLHGDGEKAVQFAEKIYRTFKLNNISICAPK</sequence>
<keyword id="KW-0067">ATP-binding</keyword>
<keyword id="KW-0378">Hydrolase</keyword>
<keyword id="KW-0547">Nucleotide-binding</keyword>
<accession>C1F030</accession>
<dbReference type="EC" id="3.5.2.9" evidence="1"/>
<dbReference type="EMBL" id="CP001407">
    <property type="protein sequence ID" value="ACO28336.1"/>
    <property type="molecule type" value="Genomic_DNA"/>
</dbReference>
<dbReference type="RefSeq" id="WP_000207337.1">
    <property type="nucleotide sequence ID" value="NZ_CP009318.1"/>
</dbReference>
<dbReference type="SMR" id="C1F030"/>
<dbReference type="KEGG" id="bcx:BCA_3156"/>
<dbReference type="PATRIC" id="fig|572264.18.peg.3113"/>
<dbReference type="Proteomes" id="UP000002210">
    <property type="component" value="Chromosome"/>
</dbReference>
<dbReference type="GO" id="GO:0017168">
    <property type="term" value="F:5-oxoprolinase (ATP-hydrolyzing) activity"/>
    <property type="evidence" value="ECO:0007669"/>
    <property type="project" value="UniProtKB-UniRule"/>
</dbReference>
<dbReference type="GO" id="GO:0005524">
    <property type="term" value="F:ATP binding"/>
    <property type="evidence" value="ECO:0007669"/>
    <property type="project" value="UniProtKB-UniRule"/>
</dbReference>
<dbReference type="GO" id="GO:0005975">
    <property type="term" value="P:carbohydrate metabolic process"/>
    <property type="evidence" value="ECO:0007669"/>
    <property type="project" value="InterPro"/>
</dbReference>
<dbReference type="CDD" id="cd10787">
    <property type="entry name" value="LamB_YcsF_like"/>
    <property type="match status" value="1"/>
</dbReference>
<dbReference type="Gene3D" id="3.20.20.370">
    <property type="entry name" value="Glycoside hydrolase/deacetylase"/>
    <property type="match status" value="1"/>
</dbReference>
<dbReference type="HAMAP" id="MF_00691">
    <property type="entry name" value="PxpA"/>
    <property type="match status" value="1"/>
</dbReference>
<dbReference type="InterPro" id="IPR011330">
    <property type="entry name" value="Glyco_hydro/deAcase_b/a-brl"/>
</dbReference>
<dbReference type="InterPro" id="IPR005501">
    <property type="entry name" value="LamB/YcsF/PxpA-like"/>
</dbReference>
<dbReference type="NCBIfam" id="NF003813">
    <property type="entry name" value="PRK05406.1-2"/>
    <property type="match status" value="1"/>
</dbReference>
<dbReference type="NCBIfam" id="NF003814">
    <property type="entry name" value="PRK05406.1-3"/>
    <property type="match status" value="1"/>
</dbReference>
<dbReference type="NCBIfam" id="NF003816">
    <property type="entry name" value="PRK05406.1-5"/>
    <property type="match status" value="1"/>
</dbReference>
<dbReference type="PANTHER" id="PTHR30292:SF0">
    <property type="entry name" value="5-OXOPROLINASE SUBUNIT A"/>
    <property type="match status" value="1"/>
</dbReference>
<dbReference type="PANTHER" id="PTHR30292">
    <property type="entry name" value="UNCHARACTERIZED PROTEIN YBGL-RELATED"/>
    <property type="match status" value="1"/>
</dbReference>
<dbReference type="Pfam" id="PF03746">
    <property type="entry name" value="LamB_YcsF"/>
    <property type="match status" value="1"/>
</dbReference>
<dbReference type="SUPFAM" id="SSF88713">
    <property type="entry name" value="Glycoside hydrolase/deacetylase"/>
    <property type="match status" value="1"/>
</dbReference>
<proteinExistence type="inferred from homology"/>
<gene>
    <name evidence="1" type="primary">pxpA</name>
    <name type="ordered locus">BCA_3156</name>
</gene>
<evidence type="ECO:0000255" key="1">
    <source>
        <dbReference type="HAMAP-Rule" id="MF_00691"/>
    </source>
</evidence>
<organism>
    <name type="scientific">Bacillus cereus (strain 03BB102)</name>
    <dbReference type="NCBI Taxonomy" id="572264"/>
    <lineage>
        <taxon>Bacteria</taxon>
        <taxon>Bacillati</taxon>
        <taxon>Bacillota</taxon>
        <taxon>Bacilli</taxon>
        <taxon>Bacillales</taxon>
        <taxon>Bacillaceae</taxon>
        <taxon>Bacillus</taxon>
        <taxon>Bacillus cereus group</taxon>
    </lineage>
</organism>
<reference key="1">
    <citation type="submission" date="2009-02" db="EMBL/GenBank/DDBJ databases">
        <title>Genome sequence of Bacillus cereus 03BB102.</title>
        <authorList>
            <person name="Dodson R.J."/>
            <person name="Jackson P."/>
            <person name="Munk A.C."/>
            <person name="Brettin T."/>
            <person name="Bruce D."/>
            <person name="Detter C."/>
            <person name="Tapia R."/>
            <person name="Han C."/>
            <person name="Sutton G."/>
            <person name="Sims D."/>
        </authorList>
    </citation>
    <scope>NUCLEOTIDE SEQUENCE [LARGE SCALE GENOMIC DNA]</scope>
    <source>
        <strain>03BB102</strain>
    </source>
</reference>
<protein>
    <recommendedName>
        <fullName evidence="1">5-oxoprolinase subunit A</fullName>
        <shortName evidence="1">5-OPase subunit A</shortName>
        <ecNumber evidence="1">3.5.2.9</ecNumber>
    </recommendedName>
    <alternativeName>
        <fullName evidence="1">5-oxoprolinase (ATP-hydrolyzing) subunit A</fullName>
    </alternativeName>
</protein>
<comment type="function">
    <text evidence="1">Catalyzes the cleavage of 5-oxoproline to form L-glutamate coupled to the hydrolysis of ATP to ADP and inorganic phosphate.</text>
</comment>
<comment type="catalytic activity">
    <reaction evidence="1">
        <text>5-oxo-L-proline + ATP + 2 H2O = L-glutamate + ADP + phosphate + H(+)</text>
        <dbReference type="Rhea" id="RHEA:10348"/>
        <dbReference type="ChEBI" id="CHEBI:15377"/>
        <dbReference type="ChEBI" id="CHEBI:15378"/>
        <dbReference type="ChEBI" id="CHEBI:29985"/>
        <dbReference type="ChEBI" id="CHEBI:30616"/>
        <dbReference type="ChEBI" id="CHEBI:43474"/>
        <dbReference type="ChEBI" id="CHEBI:58402"/>
        <dbReference type="ChEBI" id="CHEBI:456216"/>
        <dbReference type="EC" id="3.5.2.9"/>
    </reaction>
</comment>
<comment type="subunit">
    <text evidence="1">Forms a complex composed of PxpA, PxpB and PxpC.</text>
</comment>
<comment type="similarity">
    <text evidence="1">Belongs to the LamB/PxpA family.</text>
</comment>